<dbReference type="EMBL" id="CH379070">
    <property type="protein sequence ID" value="EAL30304.2"/>
    <property type="molecule type" value="Genomic_DNA"/>
</dbReference>
<dbReference type="RefSeq" id="XP_001352804.2">
    <property type="nucleotide sequence ID" value="XM_001352768.3"/>
</dbReference>
<dbReference type="SMR" id="Q29DV9"/>
<dbReference type="FunCoup" id="Q29DV9">
    <property type="interactions" value="813"/>
</dbReference>
<dbReference type="STRING" id="46245.Q29DV9"/>
<dbReference type="EnsemblMetazoa" id="FBtr0288486">
    <property type="protein sequence ID" value="FBpp0286924"/>
    <property type="gene ID" value="FBgn0074399"/>
</dbReference>
<dbReference type="GeneID" id="4812005"/>
<dbReference type="KEGG" id="dpo:4812005"/>
<dbReference type="CTD" id="90390"/>
<dbReference type="eggNOG" id="ENOG502QV3C">
    <property type="taxonomic scope" value="Eukaryota"/>
</dbReference>
<dbReference type="HOGENOM" id="CLU_074190_0_0_1"/>
<dbReference type="InParanoid" id="Q29DV9"/>
<dbReference type="OMA" id="HRDNNTE"/>
<dbReference type="Proteomes" id="UP000001819">
    <property type="component" value="Chromosome X"/>
</dbReference>
<dbReference type="Bgee" id="FBgn0074399">
    <property type="expression patterns" value="Expressed in female reproductive system and 3 other cell types or tissues"/>
</dbReference>
<dbReference type="GO" id="GO:0016592">
    <property type="term" value="C:mediator complex"/>
    <property type="evidence" value="ECO:0000250"/>
    <property type="project" value="UniProtKB"/>
</dbReference>
<dbReference type="GO" id="GO:0003712">
    <property type="term" value="F:transcription coregulator activity"/>
    <property type="evidence" value="ECO:0000250"/>
    <property type="project" value="UniProtKB"/>
</dbReference>
<dbReference type="GO" id="GO:0045893">
    <property type="term" value="P:positive regulation of DNA-templated transcription"/>
    <property type="evidence" value="ECO:0007669"/>
    <property type="project" value="TreeGrafter"/>
</dbReference>
<dbReference type="GO" id="GO:0006357">
    <property type="term" value="P:regulation of transcription by RNA polymerase II"/>
    <property type="evidence" value="ECO:0000250"/>
    <property type="project" value="UniProtKB"/>
</dbReference>
<dbReference type="InterPro" id="IPR021019">
    <property type="entry name" value="Mediator_Med30_met"/>
</dbReference>
<dbReference type="PANTHER" id="PTHR31705">
    <property type="entry name" value="MEDIATOR OF RNA POLYMERASE II TRANSCRIPTION SUBUNIT 30"/>
    <property type="match status" value="1"/>
</dbReference>
<dbReference type="PANTHER" id="PTHR31705:SF4">
    <property type="entry name" value="MEDIATOR OF RNA POLYMERASE II TRANSCRIPTION SUBUNIT 30"/>
    <property type="match status" value="1"/>
</dbReference>
<dbReference type="Pfam" id="PF11315">
    <property type="entry name" value="Med30"/>
    <property type="match status" value="1"/>
</dbReference>
<protein>
    <recommendedName>
        <fullName>Mediator of RNA polymerase II transcription subunit 30</fullName>
    </recommendedName>
    <alternativeName>
        <fullName>Mediator complex subunit 30</fullName>
    </alternativeName>
</protein>
<sequence length="325" mass="36309">MWKYGQNQGNQGPAGGGGGAPNMMPMGGFMQGGGGMQGGGGMQHGNMPQMHMTPQQQQQQQQMNMMGGPGGMQMNPNAVGPTGLMPGMSPQHQMQQQQQMMQGVPMSMPPQQAMQQQMMGPQQGLGMGGSSGPQQQQQLQQQQQQSNLQQQQQQHNVGSGGAPGAGGVGNNMLAISQPNPHKEINIVQLSRLGQETVQDIASRFQEVFSALKNIQPTSHRDNNTEKKVQEYFRTIRLLFKRVRIIYDKCNDAVMDYMNAESLIPYKDEPEPRIETSQCDEYRKVLQENHEYIETVKLKNRQLREIIDRTRIIIWEINTMLAMRRS</sequence>
<organism>
    <name type="scientific">Drosophila pseudoobscura pseudoobscura</name>
    <name type="common">Fruit fly</name>
    <dbReference type="NCBI Taxonomy" id="46245"/>
    <lineage>
        <taxon>Eukaryota</taxon>
        <taxon>Metazoa</taxon>
        <taxon>Ecdysozoa</taxon>
        <taxon>Arthropoda</taxon>
        <taxon>Hexapoda</taxon>
        <taxon>Insecta</taxon>
        <taxon>Pterygota</taxon>
        <taxon>Neoptera</taxon>
        <taxon>Endopterygota</taxon>
        <taxon>Diptera</taxon>
        <taxon>Brachycera</taxon>
        <taxon>Muscomorpha</taxon>
        <taxon>Ephydroidea</taxon>
        <taxon>Drosophilidae</taxon>
        <taxon>Drosophila</taxon>
        <taxon>Sophophora</taxon>
    </lineage>
</organism>
<keyword id="KW-0010">Activator</keyword>
<keyword id="KW-0539">Nucleus</keyword>
<keyword id="KW-1185">Reference proteome</keyword>
<keyword id="KW-0804">Transcription</keyword>
<keyword id="KW-0805">Transcription regulation</keyword>
<proteinExistence type="inferred from homology"/>
<feature type="chain" id="PRO_0000305911" description="Mediator of RNA polymerase II transcription subunit 30">
    <location>
        <begin position="1"/>
        <end position="325"/>
    </location>
</feature>
<feature type="region of interest" description="Disordered" evidence="2">
    <location>
        <begin position="1"/>
        <end position="26"/>
    </location>
</feature>
<feature type="region of interest" description="Disordered" evidence="2">
    <location>
        <begin position="109"/>
        <end position="176"/>
    </location>
</feature>
<feature type="compositionally biased region" description="Low complexity" evidence="2">
    <location>
        <begin position="1"/>
        <end position="11"/>
    </location>
</feature>
<feature type="compositionally biased region" description="Low complexity" evidence="2">
    <location>
        <begin position="109"/>
        <end position="122"/>
    </location>
</feature>
<feature type="compositionally biased region" description="Low complexity" evidence="2">
    <location>
        <begin position="132"/>
        <end position="154"/>
    </location>
</feature>
<feature type="compositionally biased region" description="Gly residues" evidence="2">
    <location>
        <begin position="158"/>
        <end position="169"/>
    </location>
</feature>
<evidence type="ECO:0000250" key="1"/>
<evidence type="ECO:0000256" key="2">
    <source>
        <dbReference type="SAM" id="MobiDB-lite"/>
    </source>
</evidence>
<evidence type="ECO:0000305" key="3"/>
<reference key="1">
    <citation type="journal article" date="2005" name="Genome Res.">
        <title>Comparative genome sequencing of Drosophila pseudoobscura: chromosomal, gene, and cis-element evolution.</title>
        <authorList>
            <person name="Richards S."/>
            <person name="Liu Y."/>
            <person name="Bettencourt B.R."/>
            <person name="Hradecky P."/>
            <person name="Letovsky S."/>
            <person name="Nielsen R."/>
            <person name="Thornton K."/>
            <person name="Hubisz M.J."/>
            <person name="Chen R."/>
            <person name="Meisel R.P."/>
            <person name="Couronne O."/>
            <person name="Hua S."/>
            <person name="Smith M.A."/>
            <person name="Zhang P."/>
            <person name="Liu J."/>
            <person name="Bussemaker H.J."/>
            <person name="van Batenburg M.F."/>
            <person name="Howells S.L."/>
            <person name="Scherer S.E."/>
            <person name="Sodergren E."/>
            <person name="Matthews B.B."/>
            <person name="Crosby M.A."/>
            <person name="Schroeder A.J."/>
            <person name="Ortiz-Barrientos D."/>
            <person name="Rives C.M."/>
            <person name="Metzker M.L."/>
            <person name="Muzny D.M."/>
            <person name="Scott G."/>
            <person name="Steffen D."/>
            <person name="Wheeler D.A."/>
            <person name="Worley K.C."/>
            <person name="Havlak P."/>
            <person name="Durbin K.J."/>
            <person name="Egan A."/>
            <person name="Gill R."/>
            <person name="Hume J."/>
            <person name="Morgan M.B."/>
            <person name="Miner G."/>
            <person name="Hamilton C."/>
            <person name="Huang Y."/>
            <person name="Waldron L."/>
            <person name="Verduzco D."/>
            <person name="Clerc-Blankenburg K.P."/>
            <person name="Dubchak I."/>
            <person name="Noor M.A.F."/>
            <person name="Anderson W."/>
            <person name="White K.P."/>
            <person name="Clark A.G."/>
            <person name="Schaeffer S.W."/>
            <person name="Gelbart W.M."/>
            <person name="Weinstock G.M."/>
            <person name="Gibbs R.A."/>
        </authorList>
    </citation>
    <scope>NUCLEOTIDE SEQUENCE [LARGE SCALE GENOMIC DNA]</scope>
    <source>
        <strain>MV2-25 / Tucson 14011-0121.94</strain>
    </source>
</reference>
<gene>
    <name type="primary">MED30</name>
    <name type="ORF">GA14371</name>
</gene>
<comment type="function">
    <text evidence="1">Component of the Mediator complex, a coactivator involved in the regulated transcription of nearly all RNA polymerase II-dependent genes. Mediator functions as a bridge to convey information from gene-specific regulatory proteins to the basal RNA polymerase II transcription machinery. Mediator is recruited to promoters by direct interactions with regulatory proteins and serves as a scaffold for the assembly of a functional preinitiation complex with RNA polymerase II and the general transcription factors (By similarity).</text>
</comment>
<comment type="subunit">
    <text evidence="1">Component of the Mediator complex.</text>
</comment>
<comment type="subcellular location">
    <subcellularLocation>
        <location evidence="3">Nucleus</location>
    </subcellularLocation>
</comment>
<comment type="similarity">
    <text evidence="3">Belongs to the Mediator complex subunit 30 family.</text>
</comment>
<name>MED30_DROPS</name>
<accession>Q29DV9</accession>